<accession>B2JDT0</accession>
<gene>
    <name evidence="1" type="primary">pdxH</name>
    <name type="ordered locus">Bphy_0514</name>
</gene>
<proteinExistence type="inferred from homology"/>
<feature type="chain" id="PRO_1000186296" description="Pyridoxine/pyridoxamine 5'-phosphate oxidase">
    <location>
        <begin position="1"/>
        <end position="212"/>
    </location>
</feature>
<feature type="binding site" evidence="1">
    <location>
        <begin position="8"/>
        <end position="11"/>
    </location>
    <ligand>
        <name>substrate</name>
    </ligand>
</feature>
<feature type="binding site" evidence="1">
    <location>
        <begin position="61"/>
        <end position="66"/>
    </location>
    <ligand>
        <name>FMN</name>
        <dbReference type="ChEBI" id="CHEBI:58210"/>
    </ligand>
</feature>
<feature type="binding site" evidence="1">
    <location>
        <position position="66"/>
    </location>
    <ligand>
        <name>substrate</name>
    </ligand>
</feature>
<feature type="binding site" evidence="1">
    <location>
        <begin position="76"/>
        <end position="77"/>
    </location>
    <ligand>
        <name>FMN</name>
        <dbReference type="ChEBI" id="CHEBI:58210"/>
    </ligand>
</feature>
<feature type="binding site" evidence="1">
    <location>
        <position position="82"/>
    </location>
    <ligand>
        <name>FMN</name>
        <dbReference type="ChEBI" id="CHEBI:58210"/>
    </ligand>
</feature>
<feature type="binding site" evidence="1">
    <location>
        <position position="83"/>
    </location>
    <ligand>
        <name>FMN</name>
        <dbReference type="ChEBI" id="CHEBI:58210"/>
    </ligand>
</feature>
<feature type="binding site" evidence="1">
    <location>
        <position position="105"/>
    </location>
    <ligand>
        <name>FMN</name>
        <dbReference type="ChEBI" id="CHEBI:58210"/>
    </ligand>
</feature>
<feature type="binding site" evidence="1">
    <location>
        <position position="123"/>
    </location>
    <ligand>
        <name>substrate</name>
    </ligand>
</feature>
<feature type="binding site" evidence="1">
    <location>
        <position position="127"/>
    </location>
    <ligand>
        <name>substrate</name>
    </ligand>
</feature>
<feature type="binding site" evidence="1">
    <location>
        <position position="131"/>
    </location>
    <ligand>
        <name>substrate</name>
    </ligand>
</feature>
<feature type="binding site" evidence="1">
    <location>
        <begin position="140"/>
        <end position="141"/>
    </location>
    <ligand>
        <name>FMN</name>
        <dbReference type="ChEBI" id="CHEBI:58210"/>
    </ligand>
</feature>
<feature type="binding site" evidence="1">
    <location>
        <position position="184"/>
    </location>
    <ligand>
        <name>FMN</name>
        <dbReference type="ChEBI" id="CHEBI:58210"/>
    </ligand>
</feature>
<feature type="binding site" evidence="1">
    <location>
        <begin position="190"/>
        <end position="192"/>
    </location>
    <ligand>
        <name>substrate</name>
    </ligand>
</feature>
<feature type="binding site" evidence="1">
    <location>
        <position position="194"/>
    </location>
    <ligand>
        <name>FMN</name>
        <dbReference type="ChEBI" id="CHEBI:58210"/>
    </ligand>
</feature>
<protein>
    <recommendedName>
        <fullName evidence="1">Pyridoxine/pyridoxamine 5'-phosphate oxidase</fullName>
        <ecNumber evidence="1">1.4.3.5</ecNumber>
    </recommendedName>
    <alternativeName>
        <fullName evidence="1">PNP/PMP oxidase</fullName>
        <shortName evidence="1">PNPOx</shortName>
    </alternativeName>
    <alternativeName>
        <fullName evidence="1">Pyridoxal 5'-phosphate synthase</fullName>
    </alternativeName>
</protein>
<dbReference type="EC" id="1.4.3.5" evidence="1"/>
<dbReference type="EMBL" id="CP001043">
    <property type="protein sequence ID" value="ACC69706.1"/>
    <property type="molecule type" value="Genomic_DNA"/>
</dbReference>
<dbReference type="RefSeq" id="WP_012399931.1">
    <property type="nucleotide sequence ID" value="NC_010622.1"/>
</dbReference>
<dbReference type="SMR" id="B2JDT0"/>
<dbReference type="STRING" id="391038.Bphy_0514"/>
<dbReference type="KEGG" id="bph:Bphy_0514"/>
<dbReference type="eggNOG" id="COG0259">
    <property type="taxonomic scope" value="Bacteria"/>
</dbReference>
<dbReference type="HOGENOM" id="CLU_032263_2_2_4"/>
<dbReference type="OrthoDB" id="9780392at2"/>
<dbReference type="UniPathway" id="UPA01068">
    <property type="reaction ID" value="UER00304"/>
</dbReference>
<dbReference type="UniPathway" id="UPA01068">
    <property type="reaction ID" value="UER00305"/>
</dbReference>
<dbReference type="Proteomes" id="UP000001192">
    <property type="component" value="Chromosome 1"/>
</dbReference>
<dbReference type="GO" id="GO:0010181">
    <property type="term" value="F:FMN binding"/>
    <property type="evidence" value="ECO:0007669"/>
    <property type="project" value="UniProtKB-UniRule"/>
</dbReference>
<dbReference type="GO" id="GO:0004733">
    <property type="term" value="F:pyridoxamine phosphate oxidase activity"/>
    <property type="evidence" value="ECO:0007669"/>
    <property type="project" value="UniProtKB-UniRule"/>
</dbReference>
<dbReference type="GO" id="GO:0008615">
    <property type="term" value="P:pyridoxine biosynthetic process"/>
    <property type="evidence" value="ECO:0007669"/>
    <property type="project" value="UniProtKB-KW"/>
</dbReference>
<dbReference type="FunFam" id="2.30.110.10:FF:000020">
    <property type="entry name" value="PNPO isoform 11"/>
    <property type="match status" value="1"/>
</dbReference>
<dbReference type="Gene3D" id="2.30.110.10">
    <property type="entry name" value="Electron Transport, Fmn-binding Protein, Chain A"/>
    <property type="match status" value="1"/>
</dbReference>
<dbReference type="HAMAP" id="MF_01629">
    <property type="entry name" value="PdxH"/>
    <property type="match status" value="1"/>
</dbReference>
<dbReference type="InterPro" id="IPR000659">
    <property type="entry name" value="Pyridox_Oxase"/>
</dbReference>
<dbReference type="InterPro" id="IPR019740">
    <property type="entry name" value="Pyridox_Oxase_CS"/>
</dbReference>
<dbReference type="InterPro" id="IPR011576">
    <property type="entry name" value="Pyridox_Oxase_N"/>
</dbReference>
<dbReference type="InterPro" id="IPR019576">
    <property type="entry name" value="Pyridoxamine_oxidase_dimer_C"/>
</dbReference>
<dbReference type="InterPro" id="IPR012349">
    <property type="entry name" value="Split_barrel_FMN-bd"/>
</dbReference>
<dbReference type="NCBIfam" id="TIGR00558">
    <property type="entry name" value="pdxH"/>
    <property type="match status" value="1"/>
</dbReference>
<dbReference type="NCBIfam" id="NF004231">
    <property type="entry name" value="PRK05679.1"/>
    <property type="match status" value="1"/>
</dbReference>
<dbReference type="PANTHER" id="PTHR10851:SF0">
    <property type="entry name" value="PYRIDOXINE-5'-PHOSPHATE OXIDASE"/>
    <property type="match status" value="1"/>
</dbReference>
<dbReference type="PANTHER" id="PTHR10851">
    <property type="entry name" value="PYRIDOXINE-5-PHOSPHATE OXIDASE"/>
    <property type="match status" value="1"/>
</dbReference>
<dbReference type="Pfam" id="PF10590">
    <property type="entry name" value="PNP_phzG_C"/>
    <property type="match status" value="1"/>
</dbReference>
<dbReference type="Pfam" id="PF01243">
    <property type="entry name" value="PNPOx_N"/>
    <property type="match status" value="1"/>
</dbReference>
<dbReference type="PIRSF" id="PIRSF000190">
    <property type="entry name" value="Pyd_amn-ph_oxd"/>
    <property type="match status" value="1"/>
</dbReference>
<dbReference type="SUPFAM" id="SSF50475">
    <property type="entry name" value="FMN-binding split barrel"/>
    <property type="match status" value="1"/>
</dbReference>
<dbReference type="PROSITE" id="PS01064">
    <property type="entry name" value="PYRIDOX_OXIDASE"/>
    <property type="match status" value="1"/>
</dbReference>
<reference key="1">
    <citation type="journal article" date="2014" name="Stand. Genomic Sci.">
        <title>Complete genome sequence of Burkholderia phymatum STM815(T), a broad host range and efficient nitrogen-fixing symbiont of Mimosa species.</title>
        <authorList>
            <person name="Moulin L."/>
            <person name="Klonowska A."/>
            <person name="Caroline B."/>
            <person name="Booth K."/>
            <person name="Vriezen J.A."/>
            <person name="Melkonian R."/>
            <person name="James E.K."/>
            <person name="Young J.P."/>
            <person name="Bena G."/>
            <person name="Hauser L."/>
            <person name="Land M."/>
            <person name="Kyrpides N."/>
            <person name="Bruce D."/>
            <person name="Chain P."/>
            <person name="Copeland A."/>
            <person name="Pitluck S."/>
            <person name="Woyke T."/>
            <person name="Lizotte-Waniewski M."/>
            <person name="Bristow J."/>
            <person name="Riley M."/>
        </authorList>
    </citation>
    <scope>NUCLEOTIDE SEQUENCE [LARGE SCALE GENOMIC DNA]</scope>
    <source>
        <strain>DSM 17167 / CIP 108236 / LMG 21445 / STM815</strain>
    </source>
</reference>
<comment type="function">
    <text evidence="1">Catalyzes the oxidation of either pyridoxine 5'-phosphate (PNP) or pyridoxamine 5'-phosphate (PMP) into pyridoxal 5'-phosphate (PLP).</text>
</comment>
<comment type="catalytic activity">
    <reaction evidence="1">
        <text>pyridoxamine 5'-phosphate + O2 + H2O = pyridoxal 5'-phosphate + H2O2 + NH4(+)</text>
        <dbReference type="Rhea" id="RHEA:15817"/>
        <dbReference type="ChEBI" id="CHEBI:15377"/>
        <dbReference type="ChEBI" id="CHEBI:15379"/>
        <dbReference type="ChEBI" id="CHEBI:16240"/>
        <dbReference type="ChEBI" id="CHEBI:28938"/>
        <dbReference type="ChEBI" id="CHEBI:58451"/>
        <dbReference type="ChEBI" id="CHEBI:597326"/>
        <dbReference type="EC" id="1.4.3.5"/>
    </reaction>
</comment>
<comment type="catalytic activity">
    <reaction evidence="1">
        <text>pyridoxine 5'-phosphate + O2 = pyridoxal 5'-phosphate + H2O2</text>
        <dbReference type="Rhea" id="RHEA:15149"/>
        <dbReference type="ChEBI" id="CHEBI:15379"/>
        <dbReference type="ChEBI" id="CHEBI:16240"/>
        <dbReference type="ChEBI" id="CHEBI:58589"/>
        <dbReference type="ChEBI" id="CHEBI:597326"/>
        <dbReference type="EC" id="1.4.3.5"/>
    </reaction>
</comment>
<comment type="cofactor">
    <cofactor evidence="1">
        <name>FMN</name>
        <dbReference type="ChEBI" id="CHEBI:58210"/>
    </cofactor>
    <text evidence="1">Binds 1 FMN per subunit.</text>
</comment>
<comment type="pathway">
    <text evidence="1">Cofactor metabolism; pyridoxal 5'-phosphate salvage; pyridoxal 5'-phosphate from pyridoxamine 5'-phosphate: step 1/1.</text>
</comment>
<comment type="pathway">
    <text evidence="1">Cofactor metabolism; pyridoxal 5'-phosphate salvage; pyridoxal 5'-phosphate from pyridoxine 5'-phosphate: step 1/1.</text>
</comment>
<comment type="subunit">
    <text evidence="1">Homodimer.</text>
</comment>
<comment type="similarity">
    <text evidence="1">Belongs to the pyridoxamine 5'-phosphate oxidase family.</text>
</comment>
<organism>
    <name type="scientific">Paraburkholderia phymatum (strain DSM 17167 / CIP 108236 / LMG 21445 / STM815)</name>
    <name type="common">Burkholderia phymatum</name>
    <dbReference type="NCBI Taxonomy" id="391038"/>
    <lineage>
        <taxon>Bacteria</taxon>
        <taxon>Pseudomonadati</taxon>
        <taxon>Pseudomonadota</taxon>
        <taxon>Betaproteobacteria</taxon>
        <taxon>Burkholderiales</taxon>
        <taxon>Burkholderiaceae</taxon>
        <taxon>Paraburkholderia</taxon>
    </lineage>
</organism>
<sequence>MSTLADLRKNYSLGSLDISDVDPNPFGQFDRWFKQAIDAQLPEPNTMTLATADARGRPSARIVLIKGVDERGFVFFTNYESRKGQELAQNPHASLLFYWIELERQVRIEGTVVKTSPEESDAYFASRPVGSRIGAWASEQSKVIESRAALEAREREFSAQYGENPPRPPHWGGYRLIPDAIEFWQGRPSRLHDRLLYTHSGGAGWTITRLSP</sequence>
<name>PDXH_PARP8</name>
<keyword id="KW-0285">Flavoprotein</keyword>
<keyword id="KW-0288">FMN</keyword>
<keyword id="KW-0560">Oxidoreductase</keyword>
<keyword id="KW-0664">Pyridoxine biosynthesis</keyword>
<keyword id="KW-1185">Reference proteome</keyword>
<evidence type="ECO:0000255" key="1">
    <source>
        <dbReference type="HAMAP-Rule" id="MF_01629"/>
    </source>
</evidence>